<feature type="chain" id="PRO_0000315321" description="Heat shock protein HspQ">
    <location>
        <begin position="1"/>
        <end position="105"/>
    </location>
</feature>
<feature type="region of interest" description="Disordered" evidence="2">
    <location>
        <begin position="80"/>
        <end position="105"/>
    </location>
</feature>
<name>HSPQ_YERPA</name>
<accession>Q1CA18</accession>
<protein>
    <recommendedName>
        <fullName evidence="1">Heat shock protein HspQ</fullName>
    </recommendedName>
</protein>
<dbReference type="EMBL" id="CP000308">
    <property type="protein sequence ID" value="ABG12704.1"/>
    <property type="molecule type" value="Genomic_DNA"/>
</dbReference>
<dbReference type="RefSeq" id="WP_002213054.1">
    <property type="nucleotide sequence ID" value="NZ_CP009906.1"/>
</dbReference>
<dbReference type="SMR" id="Q1CA18"/>
<dbReference type="GeneID" id="57977119"/>
<dbReference type="KEGG" id="ypa:YPA_0736"/>
<dbReference type="Proteomes" id="UP000001971">
    <property type="component" value="Chromosome"/>
</dbReference>
<dbReference type="GO" id="GO:0005737">
    <property type="term" value="C:cytoplasm"/>
    <property type="evidence" value="ECO:0007669"/>
    <property type="project" value="UniProtKB-SubCell"/>
</dbReference>
<dbReference type="GO" id="GO:0003677">
    <property type="term" value="F:DNA binding"/>
    <property type="evidence" value="ECO:0007669"/>
    <property type="project" value="InterPro"/>
</dbReference>
<dbReference type="GO" id="GO:0009408">
    <property type="term" value="P:response to heat"/>
    <property type="evidence" value="ECO:0007669"/>
    <property type="project" value="UniProtKB-UniRule"/>
</dbReference>
<dbReference type="Gene3D" id="2.30.30.390">
    <property type="entry name" value="Hemimethylated DNA-binding domain"/>
    <property type="match status" value="1"/>
</dbReference>
<dbReference type="HAMAP" id="MF_01194">
    <property type="entry name" value="HspQ"/>
    <property type="match status" value="1"/>
</dbReference>
<dbReference type="InterPro" id="IPR011722">
    <property type="entry name" value="Hemimethylated_DNA-bd_dom"/>
</dbReference>
<dbReference type="InterPro" id="IPR036623">
    <property type="entry name" value="Hemimethylated_DNA-bd_sf"/>
</dbReference>
<dbReference type="InterPro" id="IPR022866">
    <property type="entry name" value="HspQ"/>
</dbReference>
<dbReference type="NCBIfam" id="NF010729">
    <property type="entry name" value="PRK14129.1"/>
    <property type="match status" value="1"/>
</dbReference>
<dbReference type="NCBIfam" id="TIGR02097">
    <property type="entry name" value="yccV"/>
    <property type="match status" value="1"/>
</dbReference>
<dbReference type="Pfam" id="PF08755">
    <property type="entry name" value="YccV-like"/>
    <property type="match status" value="1"/>
</dbReference>
<dbReference type="SMART" id="SM00992">
    <property type="entry name" value="YccV-like"/>
    <property type="match status" value="1"/>
</dbReference>
<dbReference type="SUPFAM" id="SSF141255">
    <property type="entry name" value="YccV-like"/>
    <property type="match status" value="1"/>
</dbReference>
<sequence length="105" mass="11763">MIASKFGIGQQVRHSLHGYLGVVIDIDPEYSLAPPEPDEVANNKTLRSSPWYHVVIEDDDGQPVHTYLAEAQLTYEDVDAHPEQPSLDELAASIRHQLQAPHLRN</sequence>
<keyword id="KW-0963">Cytoplasm</keyword>
<keyword id="KW-0346">Stress response</keyword>
<gene>
    <name evidence="1" type="primary">hspQ</name>
    <name type="ordered locus">YPA_0736</name>
</gene>
<evidence type="ECO:0000255" key="1">
    <source>
        <dbReference type="HAMAP-Rule" id="MF_01194"/>
    </source>
</evidence>
<evidence type="ECO:0000256" key="2">
    <source>
        <dbReference type="SAM" id="MobiDB-lite"/>
    </source>
</evidence>
<proteinExistence type="inferred from homology"/>
<reference key="1">
    <citation type="journal article" date="2006" name="J. Bacteriol.">
        <title>Complete genome sequence of Yersinia pestis strains Antiqua and Nepal516: evidence of gene reduction in an emerging pathogen.</title>
        <authorList>
            <person name="Chain P.S.G."/>
            <person name="Hu P."/>
            <person name="Malfatti S.A."/>
            <person name="Radnedge L."/>
            <person name="Larimer F."/>
            <person name="Vergez L.M."/>
            <person name="Worsham P."/>
            <person name="Chu M.C."/>
            <person name="Andersen G.L."/>
        </authorList>
    </citation>
    <scope>NUCLEOTIDE SEQUENCE [LARGE SCALE GENOMIC DNA]</scope>
    <source>
        <strain>Antiqua</strain>
    </source>
</reference>
<comment type="function">
    <text evidence="1">Involved in the degradation of certain denaturated proteins, including DnaA, during heat shock stress.</text>
</comment>
<comment type="subcellular location">
    <subcellularLocation>
        <location evidence="1">Cytoplasm</location>
    </subcellularLocation>
</comment>
<comment type="similarity">
    <text evidence="1">Belongs to the HspQ family.</text>
</comment>
<organism>
    <name type="scientific">Yersinia pestis bv. Antiqua (strain Antiqua)</name>
    <dbReference type="NCBI Taxonomy" id="360102"/>
    <lineage>
        <taxon>Bacteria</taxon>
        <taxon>Pseudomonadati</taxon>
        <taxon>Pseudomonadota</taxon>
        <taxon>Gammaproteobacteria</taxon>
        <taxon>Enterobacterales</taxon>
        <taxon>Yersiniaceae</taxon>
        <taxon>Yersinia</taxon>
    </lineage>
</organism>